<name>RGA5_SCHPO</name>
<proteinExistence type="predicted"/>
<sequence>MTVVVGVLQIDDMGKKSSFASWWKQLRVKKSDDNKLFGLSLTRALEVSKVAIFLTRRDGEKVFYGYIPAVVAKCGFFLKQNATQVKGIFRVNGSSKRIQILQKAFSTGPDYGRSFDWEGYTVHDAANVFRRFINLMPEHVIPLEYYERFREPMTIPNLTDNERVEMYRRRIDELPIPNRQLLLYLLDLLSVFAMNSSKNLMTADNLAAIFQPGILSHPDHEVYSKDYQISQTALLFLINHQGSFIKTIPLSSLPPLVAAPTSPNTSSTLITQSAAPTPIASTSIRINSFNPRNGSIKRWRSFSRHSSATYSNSPSSNFSNMKSSEVDPGSPPRIKSRSYSLSRSSSMKLFHTLDRRRENRM</sequence>
<protein>
    <recommendedName>
        <fullName>Rho-GTPase-activating protein 5</fullName>
    </recommendedName>
</protein>
<organism>
    <name type="scientific">Schizosaccharomyces pombe (strain 972 / ATCC 24843)</name>
    <name type="common">Fission yeast</name>
    <dbReference type="NCBI Taxonomy" id="284812"/>
    <lineage>
        <taxon>Eukaryota</taxon>
        <taxon>Fungi</taxon>
        <taxon>Dikarya</taxon>
        <taxon>Ascomycota</taxon>
        <taxon>Taphrinomycotina</taxon>
        <taxon>Schizosaccharomycetes</taxon>
        <taxon>Schizosaccharomycetales</taxon>
        <taxon>Schizosaccharomycetaceae</taxon>
        <taxon>Schizosaccharomyces</taxon>
    </lineage>
</organism>
<keyword id="KW-0343">GTPase activation</keyword>
<keyword id="KW-0472">Membrane</keyword>
<keyword id="KW-1185">Reference proteome</keyword>
<comment type="function">
    <text evidence="3">GTPase-activating protein for Rho1. Has a role in the negative regulation of (1-3)beta-D-glucan synthase activity and cell integrity.</text>
</comment>
<comment type="subcellular location">
    <subcellularLocation>
        <location evidence="3">Membrane</location>
    </subcellularLocation>
    <text>Membrane-associated. Localizes to the cell poles and septum.</text>
</comment>
<reference key="1">
    <citation type="journal article" date="2002" name="Nature">
        <title>The genome sequence of Schizosaccharomyces pombe.</title>
        <authorList>
            <person name="Wood V."/>
            <person name="Gwilliam R."/>
            <person name="Rajandream M.A."/>
            <person name="Lyne M.H."/>
            <person name="Lyne R."/>
            <person name="Stewart A."/>
            <person name="Sgouros J.G."/>
            <person name="Peat N."/>
            <person name="Hayles J."/>
            <person name="Baker S.G."/>
            <person name="Basham D."/>
            <person name="Bowman S."/>
            <person name="Brooks K."/>
            <person name="Brown D."/>
            <person name="Brown S."/>
            <person name="Chillingworth T."/>
            <person name="Churcher C.M."/>
            <person name="Collins M."/>
            <person name="Connor R."/>
            <person name="Cronin A."/>
            <person name="Davis P."/>
            <person name="Feltwell T."/>
            <person name="Fraser A."/>
            <person name="Gentles S."/>
            <person name="Goble A."/>
            <person name="Hamlin N."/>
            <person name="Harris D.E."/>
            <person name="Hidalgo J."/>
            <person name="Hodgson G."/>
            <person name="Holroyd S."/>
            <person name="Hornsby T."/>
            <person name="Howarth S."/>
            <person name="Huckle E.J."/>
            <person name="Hunt S."/>
            <person name="Jagels K."/>
            <person name="James K.D."/>
            <person name="Jones L."/>
            <person name="Jones M."/>
            <person name="Leather S."/>
            <person name="McDonald S."/>
            <person name="McLean J."/>
            <person name="Mooney P."/>
            <person name="Moule S."/>
            <person name="Mungall K.L."/>
            <person name="Murphy L.D."/>
            <person name="Niblett D."/>
            <person name="Odell C."/>
            <person name="Oliver K."/>
            <person name="O'Neil S."/>
            <person name="Pearson D."/>
            <person name="Quail M.A."/>
            <person name="Rabbinowitsch E."/>
            <person name="Rutherford K.M."/>
            <person name="Rutter S."/>
            <person name="Saunders D."/>
            <person name="Seeger K."/>
            <person name="Sharp S."/>
            <person name="Skelton J."/>
            <person name="Simmonds M.N."/>
            <person name="Squares R."/>
            <person name="Squares S."/>
            <person name="Stevens K."/>
            <person name="Taylor K."/>
            <person name="Taylor R.G."/>
            <person name="Tivey A."/>
            <person name="Walsh S.V."/>
            <person name="Warren T."/>
            <person name="Whitehead S."/>
            <person name="Woodward J.R."/>
            <person name="Volckaert G."/>
            <person name="Aert R."/>
            <person name="Robben J."/>
            <person name="Grymonprez B."/>
            <person name="Weltjens I."/>
            <person name="Vanstreels E."/>
            <person name="Rieger M."/>
            <person name="Schaefer M."/>
            <person name="Mueller-Auer S."/>
            <person name="Gabel C."/>
            <person name="Fuchs M."/>
            <person name="Duesterhoeft A."/>
            <person name="Fritzc C."/>
            <person name="Holzer E."/>
            <person name="Moestl D."/>
            <person name="Hilbert H."/>
            <person name="Borzym K."/>
            <person name="Langer I."/>
            <person name="Beck A."/>
            <person name="Lehrach H."/>
            <person name="Reinhardt R."/>
            <person name="Pohl T.M."/>
            <person name="Eger P."/>
            <person name="Zimmermann W."/>
            <person name="Wedler H."/>
            <person name="Wambutt R."/>
            <person name="Purnelle B."/>
            <person name="Goffeau A."/>
            <person name="Cadieu E."/>
            <person name="Dreano S."/>
            <person name="Gloux S."/>
            <person name="Lelaure V."/>
            <person name="Mottier S."/>
            <person name="Galibert F."/>
            <person name="Aves S.J."/>
            <person name="Xiang Z."/>
            <person name="Hunt C."/>
            <person name="Moore K."/>
            <person name="Hurst S.M."/>
            <person name="Lucas M."/>
            <person name="Rochet M."/>
            <person name="Gaillardin C."/>
            <person name="Tallada V.A."/>
            <person name="Garzon A."/>
            <person name="Thode G."/>
            <person name="Daga R.R."/>
            <person name="Cruzado L."/>
            <person name="Jimenez J."/>
            <person name="Sanchez M."/>
            <person name="del Rey F."/>
            <person name="Benito J."/>
            <person name="Dominguez A."/>
            <person name="Revuelta J.L."/>
            <person name="Moreno S."/>
            <person name="Armstrong J."/>
            <person name="Forsburg S.L."/>
            <person name="Cerutti L."/>
            <person name="Lowe T."/>
            <person name="McCombie W.R."/>
            <person name="Paulsen I."/>
            <person name="Potashkin J."/>
            <person name="Shpakovski G.V."/>
            <person name="Ussery D."/>
            <person name="Barrell B.G."/>
            <person name="Nurse P."/>
        </authorList>
    </citation>
    <scope>NUCLEOTIDE SEQUENCE [LARGE SCALE GENOMIC DNA]</scope>
    <source>
        <strain>972 / ATCC 24843</strain>
    </source>
</reference>
<reference key="2">
    <citation type="journal article" date="2003" name="J. Biol. Chem.">
        <title>Nak1, an essential GC kinase regulates cell morphology and growth in Schizosaccharomyces pombe.</title>
        <authorList>
            <person name="Huang T.Y."/>
            <person name="Markley N.A."/>
            <person name="Young D."/>
        </authorList>
    </citation>
    <scope>NUCLEOTIDE SEQUENCE [GENOMIC DNA] OF 1-343</scope>
</reference>
<reference key="3">
    <citation type="journal article" date="2003" name="Mol. Microbiol.">
        <title>Rga5p is a specific Rho1p GTPase-activating protein that regulates cell integrity in Schizosaccharomyces pombe.</title>
        <authorList>
            <person name="Calonge T.M."/>
            <person name="Arellano M."/>
            <person name="Coll P.M."/>
            <person name="Perez P."/>
        </authorList>
    </citation>
    <scope>FUNCTION</scope>
    <scope>SUBCELLULAR LOCATION</scope>
</reference>
<dbReference type="EMBL" id="CU329671">
    <property type="protein sequence ID" value="CAA20323.2"/>
    <property type="molecule type" value="Genomic_DNA"/>
</dbReference>
<dbReference type="EMBL" id="AF091345">
    <property type="protein sequence ID" value="AAY18722.1"/>
    <property type="molecule type" value="Genomic_DNA"/>
</dbReference>
<dbReference type="PIR" id="T39723">
    <property type="entry name" value="T39723"/>
</dbReference>
<dbReference type="RefSeq" id="NP_596024.2">
    <property type="nucleotide sequence ID" value="NM_001021932.3"/>
</dbReference>
<dbReference type="SMR" id="O74335"/>
<dbReference type="BioGRID" id="276260">
    <property type="interactions" value="16"/>
</dbReference>
<dbReference type="FunCoup" id="O74335">
    <property type="interactions" value="19"/>
</dbReference>
<dbReference type="STRING" id="284812.O74335"/>
<dbReference type="iPTMnet" id="O74335"/>
<dbReference type="PaxDb" id="4896-SPBC17F3.01c.1"/>
<dbReference type="EnsemblFungi" id="SPBC17F3.01c.1">
    <property type="protein sequence ID" value="SPBC17F3.01c.1:pep"/>
    <property type="gene ID" value="SPBC17F3.01c"/>
</dbReference>
<dbReference type="GeneID" id="2539707"/>
<dbReference type="KEGG" id="spo:2539707"/>
<dbReference type="PomBase" id="SPBC17F3.01c">
    <property type="gene designation" value="rga5"/>
</dbReference>
<dbReference type="VEuPathDB" id="FungiDB:SPBC17F3.01c"/>
<dbReference type="eggNOG" id="KOG2710">
    <property type="taxonomic scope" value="Eukaryota"/>
</dbReference>
<dbReference type="HOGENOM" id="CLU_025218_2_1_1"/>
<dbReference type="InParanoid" id="O74335"/>
<dbReference type="OMA" id="IAQQDWF"/>
<dbReference type="PhylomeDB" id="O74335"/>
<dbReference type="Reactome" id="R-SPO-6798695">
    <property type="pathway name" value="Neutrophil degranulation"/>
</dbReference>
<dbReference type="Reactome" id="R-SPO-8980692">
    <property type="pathway name" value="RHOA GTPase cycle"/>
</dbReference>
<dbReference type="Reactome" id="R-SPO-9013148">
    <property type="pathway name" value="CDC42 GTPase cycle"/>
</dbReference>
<dbReference type="PRO" id="PR:O74335"/>
<dbReference type="Proteomes" id="UP000002485">
    <property type="component" value="Chromosome II"/>
</dbReference>
<dbReference type="GO" id="GO:0005938">
    <property type="term" value="C:cell cortex"/>
    <property type="evidence" value="ECO:0000318"/>
    <property type="project" value="GO_Central"/>
</dbReference>
<dbReference type="GO" id="GO:0051286">
    <property type="term" value="C:cell tip"/>
    <property type="evidence" value="ECO:0000314"/>
    <property type="project" value="PomBase"/>
</dbReference>
<dbReference type="GO" id="GO:0031097">
    <property type="term" value="C:medial cortex"/>
    <property type="evidence" value="ECO:0000314"/>
    <property type="project" value="PomBase"/>
</dbReference>
<dbReference type="GO" id="GO:0016020">
    <property type="term" value="C:membrane"/>
    <property type="evidence" value="ECO:0007669"/>
    <property type="project" value="UniProtKB-SubCell"/>
</dbReference>
<dbReference type="GO" id="GO:0005096">
    <property type="term" value="F:GTPase activator activity"/>
    <property type="evidence" value="ECO:0000314"/>
    <property type="project" value="PomBase"/>
</dbReference>
<dbReference type="GO" id="GO:0035024">
    <property type="term" value="P:negative regulation of Rho protein signal transduction"/>
    <property type="evidence" value="ECO:0000318"/>
    <property type="project" value="GO_Central"/>
</dbReference>
<dbReference type="GO" id="GO:0090334">
    <property type="term" value="P:regulation of cell wall (1-&gt;3)-beta-D-glucan biosynthetic process"/>
    <property type="evidence" value="ECO:0000315"/>
    <property type="project" value="PomBase"/>
</dbReference>
<dbReference type="GO" id="GO:0060237">
    <property type="term" value="P:regulation of fungal-type cell wall organization"/>
    <property type="evidence" value="ECO:0000318"/>
    <property type="project" value="GO_Central"/>
</dbReference>
<dbReference type="GO" id="GO:0007165">
    <property type="term" value="P:signal transduction"/>
    <property type="evidence" value="ECO:0007669"/>
    <property type="project" value="InterPro"/>
</dbReference>
<dbReference type="CDD" id="cd04396">
    <property type="entry name" value="RhoGAP_fSAC7_BAG7"/>
    <property type="match status" value="1"/>
</dbReference>
<dbReference type="Gene3D" id="1.10.555.10">
    <property type="entry name" value="Rho GTPase activation protein"/>
    <property type="match status" value="1"/>
</dbReference>
<dbReference type="InterPro" id="IPR008936">
    <property type="entry name" value="Rho_GTPase_activation_prot"/>
</dbReference>
<dbReference type="InterPro" id="IPR051025">
    <property type="entry name" value="RhoGAP"/>
</dbReference>
<dbReference type="InterPro" id="IPR000198">
    <property type="entry name" value="RhoGAP_dom"/>
</dbReference>
<dbReference type="PANTHER" id="PTHR15228:SF25">
    <property type="entry name" value="F-BAR DOMAIN-CONTAINING PROTEIN"/>
    <property type="match status" value="1"/>
</dbReference>
<dbReference type="PANTHER" id="PTHR15228">
    <property type="entry name" value="SPERMATHECAL PHYSIOLOGY VARIANT"/>
    <property type="match status" value="1"/>
</dbReference>
<dbReference type="Pfam" id="PF00620">
    <property type="entry name" value="RhoGAP"/>
    <property type="match status" value="1"/>
</dbReference>
<dbReference type="SMART" id="SM00324">
    <property type="entry name" value="RhoGAP"/>
    <property type="match status" value="1"/>
</dbReference>
<dbReference type="SUPFAM" id="SSF48350">
    <property type="entry name" value="GTPase activation domain, GAP"/>
    <property type="match status" value="1"/>
</dbReference>
<dbReference type="PROSITE" id="PS50238">
    <property type="entry name" value="RHOGAP"/>
    <property type="match status" value="1"/>
</dbReference>
<evidence type="ECO:0000255" key="1">
    <source>
        <dbReference type="PROSITE-ProRule" id="PRU00172"/>
    </source>
</evidence>
<evidence type="ECO:0000256" key="2">
    <source>
        <dbReference type="SAM" id="MobiDB-lite"/>
    </source>
</evidence>
<evidence type="ECO:0000269" key="3">
    <source>
    </source>
</evidence>
<feature type="chain" id="PRO_0000097313" description="Rho-GTPase-activating protein 5">
    <location>
        <begin position="1"/>
        <end position="361"/>
    </location>
</feature>
<feature type="domain" description="Rho-GAP" evidence="1">
    <location>
        <begin position="52"/>
        <end position="245"/>
    </location>
</feature>
<feature type="region of interest" description="Disordered" evidence="2">
    <location>
        <begin position="306"/>
        <end position="345"/>
    </location>
</feature>
<feature type="compositionally biased region" description="Low complexity" evidence="2">
    <location>
        <begin position="306"/>
        <end position="323"/>
    </location>
</feature>
<feature type="site" description="Arginine finger; crucial for GTP hydrolysis by stabilizing the transition state" evidence="1">
    <location>
        <position position="90"/>
    </location>
</feature>
<accession>O74335</accession>
<accession>Q50JD6</accession>
<accession>Q9USS5</accession>
<gene>
    <name type="primary">rga5</name>
    <name type="ORF">SPBC17F3.01c</name>
    <name type="ORF">SPBC557.01</name>
</gene>